<evidence type="ECO:0000250" key="1"/>
<evidence type="ECO:0000250" key="2">
    <source>
        <dbReference type="UniProtKB" id="P06241"/>
    </source>
</evidence>
<evidence type="ECO:0000250" key="3">
    <source>
        <dbReference type="UniProtKB" id="P28523"/>
    </source>
</evidence>
<evidence type="ECO:0000250" key="4">
    <source>
        <dbReference type="UniProtKB" id="P39688"/>
    </source>
</evidence>
<evidence type="ECO:0000250" key="5">
    <source>
        <dbReference type="UniProtKB" id="Q62844"/>
    </source>
</evidence>
<evidence type="ECO:0000255" key="6">
    <source>
        <dbReference type="PROSITE-ProRule" id="PRU00159"/>
    </source>
</evidence>
<evidence type="ECO:0000255" key="7">
    <source>
        <dbReference type="PROSITE-ProRule" id="PRU00191"/>
    </source>
</evidence>
<evidence type="ECO:0000255" key="8">
    <source>
        <dbReference type="PROSITE-ProRule" id="PRU00192"/>
    </source>
</evidence>
<evidence type="ECO:0000255" key="9">
    <source>
        <dbReference type="PROSITE-ProRule" id="PRU10028"/>
    </source>
</evidence>
<evidence type="ECO:0000256" key="10">
    <source>
        <dbReference type="SAM" id="MobiDB-lite"/>
    </source>
</evidence>
<evidence type="ECO:0000269" key="11">
    <source>
    </source>
</evidence>
<evidence type="ECO:0000305" key="12"/>
<evidence type="ECO:0000312" key="13">
    <source>
        <dbReference type="EMBL" id="AAI26592.1"/>
    </source>
</evidence>
<comment type="function">
    <text evidence="2 4 11">Non-receptor tyrosine-protein kinase that plays a role in many biological processes including regulation of cell growth and survival, cell adhesion, integrin-mediated signaling, cytoskeletal remodeling, cell motility, immune response and axon guidance (PubMed:10930415). Inactive FYN is phosphorylated on its C-terminal tail within the catalytic domain (By similarity). Following activation by PKA, the protein subsequently associates with PTK2/FAK1, allowing PTK2/FAK1 phosphorylation, activation and targeting to focal adhesions (By similarity). Involved in the regulation of cell adhesion and motility through phosphorylation of CTNNB1 (beta-catenin) and CTNND1 (delta-catenin) (By similarity). Regulates cytoskeletal remodeling by phosphorylating several proteins including the actin regulator WAS and the microtubule-associated proteins MAP2 and MAPT (By similarity). Promotes cell survival by phosphorylating AGAP2/PIKE-A and preventing its apoptotic cleavage (By similarity). Participates in signal transduction pathways that regulate the integrity of the glomerular slit diaphragm (an essential part of the glomerular filter of the kidney) by phosphorylating several slit diaphragm components including NPHS1, KIRREL1 and TRPC6 (By similarity). Plays a role in neural processes by phosphorylating DPYSL2, a multifunctional adapter protein within the central nervous system, ARHGAP32, a regulator for Rho family GTPases implicated in various neural functions, and SNCA, a small pre-synaptic protein (By similarity). Involved in reelin signaling by mediating phosphorylation of DAB1 following reelin (RELN)-binding to its receptor (By similarity). Participates in the downstream signaling pathways that lead to T-cell differentiation and proliferation following T-cell receptor (TCR) stimulation (By similarity). Phosphorylates PTK2B/PYK2 in response to T-cell receptor activation (By similarity). Also participates in negative feedback regulation of TCR signaling through phosphorylation of PAG1, thereby promoting interaction between PAG1 and CSK and recruitment of CSK to lipid rafts (By similarity). CSK maintains LCK and FYN in an inactive form (By similarity). Promotes CD28-induced phosphorylation of VAV1 (By similarity). In mast cells, phosphorylates CLNK after activation of immunoglobulin epsilon receptor signaling (By similarity). Can also promote CD244-mediated NK cell activation (By similarity).</text>
</comment>
<comment type="catalytic activity">
    <reaction evidence="9 11">
        <text>L-tyrosyl-[protein] + ATP = O-phospho-L-tyrosyl-[protein] + ADP + H(+)</text>
        <dbReference type="Rhea" id="RHEA:10596"/>
        <dbReference type="Rhea" id="RHEA-COMP:10136"/>
        <dbReference type="Rhea" id="RHEA-COMP:20101"/>
        <dbReference type="ChEBI" id="CHEBI:15378"/>
        <dbReference type="ChEBI" id="CHEBI:30616"/>
        <dbReference type="ChEBI" id="CHEBI:46858"/>
        <dbReference type="ChEBI" id="CHEBI:61978"/>
        <dbReference type="ChEBI" id="CHEBI:456216"/>
        <dbReference type="EC" id="2.7.10.2"/>
    </reaction>
</comment>
<comment type="cofactor">
    <cofactor evidence="1">
        <name>Mn(2+)</name>
        <dbReference type="ChEBI" id="CHEBI:29035"/>
    </cofactor>
</comment>
<comment type="activity regulation">
    <text evidence="2">Inhibited by phosphorylation of Tyr-531 by leukocyte common antigen and activated by dephosphorylation of this site.</text>
</comment>
<comment type="subunit">
    <text evidence="2 4 5">Interacts (via its SH3 domain) with PIK3R1 and PRMT8. Interacts with FYB1, PAG1, and SH2D1A. Interacts with CD79A (tyrosine-phosphorylated form); the interaction increases FYN activity. Interacts (via SH2 domain) with CSF1R (tyrosine phosphorylated) (By similarity). Interacts with TOM1L1 (phosphorylated form). Interacts with KDR (tyrosine phosphorylated). Interacts (via SH3 domain) with KLHL2 (via N-terminus) (By similarity). Interacts with SH2D1A and SLAMF1. Interacts with ITCH; the interaction phosphorylates ITCH and negatively regulates its activity. Interacts with FASLG. Interacts with RUNX3. Interacts with KIT. Interacts with EPHA8; possible downstream effector of EPHA8 in regulation of cell adhesion. Interacts with PTK2/FAK1; this interaction leads to PTK2/FAK1 phosphorylation and activation. Interacts with CAV1; this interaction couples integrins to the Ras-ERK pathway. Interacts with UNC119. Interacts (via SH2 domain) with PTPRH (phosphorylated form) (By similarity). Interacts with PTPRO (phosphorylated form) (By similarity). Interacts with PTPRB (phosphorylated form) (By similarity). Interacts with FYB2 (By similarity). Interacts with DSCAM (By similarity). Interacts with SKAP1 and FYB1; this interaction promotes the phosphorylation of CLNK (By similarity). Interacts with NEDD9; in the presence of PTK2 (By similarity).</text>
</comment>
<comment type="subcellular location">
    <subcellularLocation>
        <location evidence="2">Cytoplasm</location>
    </subcellularLocation>
    <subcellularLocation>
        <location evidence="2">Nucleus</location>
    </subcellularLocation>
    <subcellularLocation>
        <location evidence="2">Cell membrane</location>
    </subcellularLocation>
    <subcellularLocation>
        <location evidence="5">Perikaryon</location>
    </subcellularLocation>
    <text evidence="2">Present and active in lipid rafts (By similarity). Palmitoylation is crucial for proper trafficking (By similarity).</text>
</comment>
<comment type="PTM">
    <text evidence="2 4">Autophosphorylated at Tyr-420 (By similarity). Phosphorylation on the C-terminal tail at Tyr-531 by CSK maintains the enzyme in an inactive state. PTPRC/CD45 dephosphorylates Tyr-531 leading to activation. Ultraviolet B (UVB) strongly increase phosphorylation at Thr-12 and kinase activity, and promotes translocation from the cytoplasm to the nucleus. Dephosphorylation at Tyr-420 by PTPN2 negatively regulates T-cell receptor signaling (By similarity). Phosphorylated at tyrosine residues, which can be enhanced by NTN1 (By similarity).</text>
</comment>
<comment type="PTM">
    <text evidence="4">Palmitoylated. Palmitoylation at Cys-3 and Cys-6, probably by ZDHHC21, regulates subcellular location.</text>
</comment>
<comment type="similarity">
    <text evidence="6">Belongs to the protein kinase superfamily. Tyr protein kinase family. SRC subfamily.</text>
</comment>
<feature type="initiator methionine" description="Removed" evidence="2">
    <location>
        <position position="1"/>
    </location>
</feature>
<feature type="chain" id="PRO_0000282314" description="Tyrosine-protein kinase Fyn">
    <location>
        <begin position="2"/>
        <end position="537"/>
    </location>
</feature>
<feature type="domain" description="SH3" evidence="8">
    <location>
        <begin position="82"/>
        <end position="143"/>
    </location>
</feature>
<feature type="domain" description="SH2" evidence="7">
    <location>
        <begin position="149"/>
        <end position="246"/>
    </location>
</feature>
<feature type="domain" description="Protein kinase" evidence="6">
    <location>
        <begin position="271"/>
        <end position="524"/>
    </location>
</feature>
<feature type="region of interest" description="Disordered" evidence="10">
    <location>
        <begin position="14"/>
        <end position="35"/>
    </location>
</feature>
<feature type="active site" description="Proton acceptor" evidence="3 6 9">
    <location>
        <position position="390"/>
    </location>
</feature>
<feature type="binding site" evidence="3 6">
    <location>
        <begin position="277"/>
        <end position="285"/>
    </location>
    <ligand>
        <name>ATP</name>
        <dbReference type="ChEBI" id="CHEBI:30616"/>
    </ligand>
</feature>
<feature type="binding site" evidence="5 6">
    <location>
        <position position="299"/>
    </location>
    <ligand>
        <name>ATP</name>
        <dbReference type="ChEBI" id="CHEBI:30616"/>
    </ligand>
</feature>
<feature type="modified residue" description="Phosphothreonine; by PKC" evidence="2">
    <location>
        <position position="12"/>
    </location>
</feature>
<feature type="modified residue" description="Phosphoserine" evidence="2">
    <location>
        <position position="21"/>
    </location>
</feature>
<feature type="modified residue" description="Phosphoserine" evidence="2">
    <location>
        <position position="26"/>
    </location>
</feature>
<feature type="modified residue" description="Phosphotyrosine" evidence="4">
    <location>
        <position position="185"/>
    </location>
</feature>
<feature type="modified residue" description="Phosphotyrosine; by autocatalysis" evidence="4">
    <location>
        <position position="420"/>
    </location>
</feature>
<feature type="modified residue" description="Phosphotyrosine; by CSK" evidence="2">
    <location>
        <position position="531"/>
    </location>
</feature>
<feature type="lipid moiety-binding region" description="N-myristoyl glycine" evidence="4">
    <location>
        <position position="2"/>
    </location>
</feature>
<feature type="lipid moiety-binding region" description="S-palmitoyl cysteine" evidence="4">
    <location>
        <position position="3"/>
    </location>
</feature>
<feature type="lipid moiety-binding region" description="S-palmitoyl cysteine" evidence="4">
    <location>
        <position position="6"/>
    </location>
</feature>
<gene>
    <name evidence="13" type="primary">FYN</name>
</gene>
<name>FYN_BOVIN</name>
<protein>
    <recommendedName>
        <fullName>Tyrosine-protein kinase Fyn</fullName>
        <ecNumber>2.7.10.2</ecNumber>
    </recommendedName>
    <alternativeName>
        <fullName>Proto-oncogene c-Fyn</fullName>
    </alternativeName>
    <alternativeName>
        <fullName>p59-Fyn</fullName>
    </alternativeName>
</protein>
<proteinExistence type="evidence at transcript level"/>
<dbReference type="EC" id="2.7.10.2"/>
<dbReference type="EMBL" id="BC126591">
    <property type="protein sequence ID" value="AAI26592.1"/>
    <property type="molecule type" value="mRNA"/>
</dbReference>
<dbReference type="RefSeq" id="NP_001071440.1">
    <property type="nucleotide sequence ID" value="NM_001077972.1"/>
</dbReference>
<dbReference type="RefSeq" id="XP_005210845.1">
    <property type="nucleotide sequence ID" value="XM_005210788.4"/>
</dbReference>
<dbReference type="RefSeq" id="XP_005210846.1">
    <property type="nucleotide sequence ID" value="XM_005210789.5"/>
</dbReference>
<dbReference type="RefSeq" id="XP_005210847.1">
    <property type="nucleotide sequence ID" value="XM_005210790.3"/>
</dbReference>
<dbReference type="RefSeq" id="XP_059745713.1">
    <property type="nucleotide sequence ID" value="XM_059889730.1"/>
</dbReference>
<dbReference type="BMRB" id="A0JNB0"/>
<dbReference type="SMR" id="A0JNB0"/>
<dbReference type="FunCoup" id="A0JNB0">
    <property type="interactions" value="1693"/>
</dbReference>
<dbReference type="STRING" id="9913.ENSBTAP00000015730"/>
<dbReference type="PaxDb" id="9913-ENSBTAP00000015730"/>
<dbReference type="Ensembl" id="ENSBTAT00000015730.5">
    <property type="protein sequence ID" value="ENSBTAP00000015730.4"/>
    <property type="gene ID" value="ENSBTAG00000011851.7"/>
</dbReference>
<dbReference type="GeneID" id="527263"/>
<dbReference type="KEGG" id="bta:527263"/>
<dbReference type="CTD" id="2534"/>
<dbReference type="VEuPathDB" id="HostDB:ENSBTAG00000011851"/>
<dbReference type="VGNC" id="VGNC:29163">
    <property type="gene designation" value="FYN"/>
</dbReference>
<dbReference type="eggNOG" id="KOG0197">
    <property type="taxonomic scope" value="Eukaryota"/>
</dbReference>
<dbReference type="GeneTree" id="ENSGT00940000155462"/>
<dbReference type="HOGENOM" id="CLU_000288_7_2_1"/>
<dbReference type="InParanoid" id="A0JNB0"/>
<dbReference type="OMA" id="XWYFGKL"/>
<dbReference type="OrthoDB" id="4062651at2759"/>
<dbReference type="TreeFam" id="TF351634"/>
<dbReference type="Reactome" id="R-BTA-114604">
    <property type="pathway name" value="GPVI-mediated activation cascade"/>
</dbReference>
<dbReference type="Reactome" id="R-BTA-1227986">
    <property type="pathway name" value="Signaling by ERBB2"/>
</dbReference>
<dbReference type="Reactome" id="R-BTA-1257604">
    <property type="pathway name" value="PIP3 activates AKT signaling"/>
</dbReference>
<dbReference type="Reactome" id="R-BTA-1433557">
    <property type="pathway name" value="Signaling by SCF-KIT"/>
</dbReference>
<dbReference type="Reactome" id="R-BTA-1433559">
    <property type="pathway name" value="Regulation of KIT signaling"/>
</dbReference>
<dbReference type="Reactome" id="R-BTA-202733">
    <property type="pathway name" value="Cell surface interactions at the vascular wall"/>
</dbReference>
<dbReference type="Reactome" id="R-BTA-2029481">
    <property type="pathway name" value="FCGR activation"/>
</dbReference>
<dbReference type="Reactome" id="R-BTA-210990">
    <property type="pathway name" value="PECAM1 interactions"/>
</dbReference>
<dbReference type="Reactome" id="R-BTA-2424491">
    <property type="pathway name" value="DAP12 signaling"/>
</dbReference>
<dbReference type="Reactome" id="R-BTA-373753">
    <property type="pathway name" value="Nephrin family interactions"/>
</dbReference>
<dbReference type="Reactome" id="R-BTA-375165">
    <property type="pathway name" value="NCAM signaling for neurite out-growth"/>
</dbReference>
<dbReference type="Reactome" id="R-BTA-389356">
    <property type="pathway name" value="Co-stimulation by CD28"/>
</dbReference>
<dbReference type="Reactome" id="R-BTA-389357">
    <property type="pathway name" value="CD28 dependent PI3K/Akt signaling"/>
</dbReference>
<dbReference type="Reactome" id="R-BTA-389359">
    <property type="pathway name" value="CD28 dependent Vav1 pathway"/>
</dbReference>
<dbReference type="Reactome" id="R-BTA-389513">
    <property type="pathway name" value="Co-inhibition by CTLA4"/>
</dbReference>
<dbReference type="Reactome" id="R-BTA-3928663">
    <property type="pathway name" value="EPHA-mediated growth cone collapse"/>
</dbReference>
<dbReference type="Reactome" id="R-BTA-3928664">
    <property type="pathway name" value="Ephrin signaling"/>
</dbReference>
<dbReference type="Reactome" id="R-BTA-3928665">
    <property type="pathway name" value="EPH-ephrin mediated repulsion of cells"/>
</dbReference>
<dbReference type="Reactome" id="R-BTA-399954">
    <property type="pathway name" value="Sema3A PAK dependent Axon repulsion"/>
</dbReference>
<dbReference type="Reactome" id="R-BTA-399955">
    <property type="pathway name" value="SEMA3A-Plexin repulsion signaling by inhibiting Integrin adhesion"/>
</dbReference>
<dbReference type="Reactome" id="R-BTA-399956">
    <property type="pathway name" value="CRMPs in Sema3A signaling"/>
</dbReference>
<dbReference type="Reactome" id="R-BTA-418885">
    <property type="pathway name" value="DCC mediated attractive signaling"/>
</dbReference>
<dbReference type="Reactome" id="R-BTA-4420097">
    <property type="pathway name" value="VEGFA-VEGFR2 Pathway"/>
</dbReference>
<dbReference type="Reactome" id="R-BTA-5621480">
    <property type="pathway name" value="Dectin-2 family"/>
</dbReference>
<dbReference type="Reactome" id="R-BTA-5673001">
    <property type="pathway name" value="RAF/MAP kinase cascade"/>
</dbReference>
<dbReference type="Reactome" id="R-BTA-6811558">
    <property type="pathway name" value="PI5P, PP2A and IER3 Regulate PI3K/AKT Signaling"/>
</dbReference>
<dbReference type="Reactome" id="R-BTA-75892">
    <property type="pathway name" value="Platelet Adhesion to exposed collagen"/>
</dbReference>
<dbReference type="Reactome" id="R-BTA-8866376">
    <property type="pathway name" value="Reelin signalling pathway"/>
</dbReference>
<dbReference type="Reactome" id="R-BTA-9032759">
    <property type="pathway name" value="NTRK2 activates RAC1"/>
</dbReference>
<dbReference type="Reactome" id="R-BTA-912631">
    <property type="pathway name" value="Regulation of signaling by CBL"/>
</dbReference>
<dbReference type="Proteomes" id="UP000009136">
    <property type="component" value="Chromosome 9"/>
</dbReference>
<dbReference type="Bgee" id="ENSBTAG00000011851">
    <property type="expression patterns" value="Expressed in floor plate of diencephalon and 105 other cell types or tissues"/>
</dbReference>
<dbReference type="GO" id="GO:0005884">
    <property type="term" value="C:actin filament"/>
    <property type="evidence" value="ECO:0007669"/>
    <property type="project" value="Ensembl"/>
</dbReference>
<dbReference type="GO" id="GO:0005829">
    <property type="term" value="C:cytosol"/>
    <property type="evidence" value="ECO:0007669"/>
    <property type="project" value="Ensembl"/>
</dbReference>
<dbReference type="GO" id="GO:0030425">
    <property type="term" value="C:dendrite"/>
    <property type="evidence" value="ECO:0007669"/>
    <property type="project" value="Ensembl"/>
</dbReference>
<dbReference type="GO" id="GO:0005768">
    <property type="term" value="C:endosome"/>
    <property type="evidence" value="ECO:0007669"/>
    <property type="project" value="Ensembl"/>
</dbReference>
<dbReference type="GO" id="GO:0097386">
    <property type="term" value="C:glial cell projection"/>
    <property type="evidence" value="ECO:0007669"/>
    <property type="project" value="Ensembl"/>
</dbReference>
<dbReference type="GO" id="GO:0045121">
    <property type="term" value="C:membrane raft"/>
    <property type="evidence" value="ECO:0007669"/>
    <property type="project" value="Ensembl"/>
</dbReference>
<dbReference type="GO" id="GO:0005634">
    <property type="term" value="C:nucleus"/>
    <property type="evidence" value="ECO:0007669"/>
    <property type="project" value="UniProtKB-SubCell"/>
</dbReference>
<dbReference type="GO" id="GO:0043204">
    <property type="term" value="C:perikaryon"/>
    <property type="evidence" value="ECO:0007669"/>
    <property type="project" value="UniProtKB-SubCell"/>
</dbReference>
<dbReference type="GO" id="GO:0005886">
    <property type="term" value="C:plasma membrane"/>
    <property type="evidence" value="ECO:0000318"/>
    <property type="project" value="GO_Central"/>
</dbReference>
<dbReference type="GO" id="GO:0014069">
    <property type="term" value="C:postsynaptic density"/>
    <property type="evidence" value="ECO:0007669"/>
    <property type="project" value="Ensembl"/>
</dbReference>
<dbReference type="GO" id="GO:0098685">
    <property type="term" value="C:Schaffer collateral - CA1 synapse"/>
    <property type="evidence" value="ECO:0007669"/>
    <property type="project" value="Ensembl"/>
</dbReference>
<dbReference type="GO" id="GO:0043014">
    <property type="term" value="F:alpha-tubulin binding"/>
    <property type="evidence" value="ECO:0007669"/>
    <property type="project" value="Ensembl"/>
</dbReference>
<dbReference type="GO" id="GO:0005524">
    <property type="term" value="F:ATP binding"/>
    <property type="evidence" value="ECO:0007669"/>
    <property type="project" value="UniProtKB-KW"/>
</dbReference>
<dbReference type="GO" id="GO:0097718">
    <property type="term" value="F:disordered domain specific binding"/>
    <property type="evidence" value="ECO:0007669"/>
    <property type="project" value="Ensembl"/>
</dbReference>
<dbReference type="GO" id="GO:0046875">
    <property type="term" value="F:ephrin receptor binding"/>
    <property type="evidence" value="ECO:0007669"/>
    <property type="project" value="Ensembl"/>
</dbReference>
<dbReference type="GO" id="GO:0001664">
    <property type="term" value="F:G protein-coupled receptor binding"/>
    <property type="evidence" value="ECO:0007669"/>
    <property type="project" value="Ensembl"/>
</dbReference>
<dbReference type="GO" id="GO:0070851">
    <property type="term" value="F:growth factor receptor binding"/>
    <property type="evidence" value="ECO:0007669"/>
    <property type="project" value="Ensembl"/>
</dbReference>
<dbReference type="GO" id="GO:0042802">
    <property type="term" value="F:identical protein binding"/>
    <property type="evidence" value="ECO:0007669"/>
    <property type="project" value="Ensembl"/>
</dbReference>
<dbReference type="GO" id="GO:0046872">
    <property type="term" value="F:metal ion binding"/>
    <property type="evidence" value="ECO:0007669"/>
    <property type="project" value="UniProtKB-KW"/>
</dbReference>
<dbReference type="GO" id="GO:0004715">
    <property type="term" value="F:non-membrane spanning protein tyrosine kinase activity"/>
    <property type="evidence" value="ECO:0000318"/>
    <property type="project" value="GO_Central"/>
</dbReference>
<dbReference type="GO" id="GO:0016004">
    <property type="term" value="F:phospholipase activator activity"/>
    <property type="evidence" value="ECO:0007669"/>
    <property type="project" value="Ensembl"/>
</dbReference>
<dbReference type="GO" id="GO:0043274">
    <property type="term" value="F:phospholipase binding"/>
    <property type="evidence" value="ECO:0007669"/>
    <property type="project" value="Ensembl"/>
</dbReference>
<dbReference type="GO" id="GO:0004713">
    <property type="term" value="F:protein tyrosine kinase activity"/>
    <property type="evidence" value="ECO:0000250"/>
    <property type="project" value="UniProtKB"/>
</dbReference>
<dbReference type="GO" id="GO:0097110">
    <property type="term" value="F:scaffold protein binding"/>
    <property type="evidence" value="ECO:0007669"/>
    <property type="project" value="Ensembl"/>
</dbReference>
<dbReference type="GO" id="GO:0005102">
    <property type="term" value="F:signaling receptor binding"/>
    <property type="evidence" value="ECO:0000318"/>
    <property type="project" value="GO_Central"/>
</dbReference>
<dbReference type="GO" id="GO:0048156">
    <property type="term" value="F:tau protein binding"/>
    <property type="evidence" value="ECO:0007669"/>
    <property type="project" value="Ensembl"/>
</dbReference>
<dbReference type="GO" id="GO:0044325">
    <property type="term" value="F:transmembrane transporter binding"/>
    <property type="evidence" value="ECO:0007669"/>
    <property type="project" value="Ensembl"/>
</dbReference>
<dbReference type="GO" id="GO:0050798">
    <property type="term" value="P:activated T cell proliferation"/>
    <property type="evidence" value="ECO:0007669"/>
    <property type="project" value="Ensembl"/>
</dbReference>
<dbReference type="GO" id="GO:0002250">
    <property type="term" value="P:adaptive immune response"/>
    <property type="evidence" value="ECO:0007669"/>
    <property type="project" value="UniProtKB-KW"/>
</dbReference>
<dbReference type="GO" id="GO:0030154">
    <property type="term" value="P:cell differentiation"/>
    <property type="evidence" value="ECO:0000318"/>
    <property type="project" value="GO_Central"/>
</dbReference>
<dbReference type="GO" id="GO:0007169">
    <property type="term" value="P:cell surface receptor protein tyrosine kinase signaling pathway"/>
    <property type="evidence" value="ECO:0000318"/>
    <property type="project" value="GO_Central"/>
</dbReference>
<dbReference type="GO" id="GO:1904646">
    <property type="term" value="P:cellular response to amyloid-beta"/>
    <property type="evidence" value="ECO:0007669"/>
    <property type="project" value="Ensembl"/>
</dbReference>
<dbReference type="GO" id="GO:0036120">
    <property type="term" value="P:cellular response to platelet-derived growth factor stimulus"/>
    <property type="evidence" value="ECO:0007669"/>
    <property type="project" value="Ensembl"/>
</dbReference>
<dbReference type="GO" id="GO:0071560">
    <property type="term" value="P:cellular response to transforming growth factor beta stimulus"/>
    <property type="evidence" value="ECO:0007669"/>
    <property type="project" value="Ensembl"/>
</dbReference>
<dbReference type="GO" id="GO:0048813">
    <property type="term" value="P:dendrite morphogenesis"/>
    <property type="evidence" value="ECO:0007669"/>
    <property type="project" value="Ensembl"/>
</dbReference>
<dbReference type="GO" id="GO:0050966">
    <property type="term" value="P:detection of mechanical stimulus involved in sensory perception of pain"/>
    <property type="evidence" value="ECO:0007669"/>
    <property type="project" value="Ensembl"/>
</dbReference>
<dbReference type="GO" id="GO:0030900">
    <property type="term" value="P:forebrain development"/>
    <property type="evidence" value="ECO:0007669"/>
    <property type="project" value="Ensembl"/>
</dbReference>
<dbReference type="GO" id="GO:0007216">
    <property type="term" value="P:G protein-coupled glutamate receptor signaling pathway"/>
    <property type="evidence" value="ECO:0007669"/>
    <property type="project" value="Ensembl"/>
</dbReference>
<dbReference type="GO" id="GO:0010467">
    <property type="term" value="P:gene expression"/>
    <property type="evidence" value="ECO:0007669"/>
    <property type="project" value="Ensembl"/>
</dbReference>
<dbReference type="GO" id="GO:0003015">
    <property type="term" value="P:heart process"/>
    <property type="evidence" value="ECO:0007669"/>
    <property type="project" value="Ensembl"/>
</dbReference>
<dbReference type="GO" id="GO:0035556">
    <property type="term" value="P:intracellular signal transduction"/>
    <property type="evidence" value="ECO:0007669"/>
    <property type="project" value="Ensembl"/>
</dbReference>
<dbReference type="GO" id="GO:0050804">
    <property type="term" value="P:modulation of chemical synaptic transmission"/>
    <property type="evidence" value="ECO:0007669"/>
    <property type="project" value="Ensembl"/>
</dbReference>
<dbReference type="GO" id="GO:0030101">
    <property type="term" value="P:natural killer cell activation"/>
    <property type="evidence" value="ECO:0007669"/>
    <property type="project" value="Ensembl"/>
</dbReference>
<dbReference type="GO" id="GO:0016525">
    <property type="term" value="P:negative regulation of angiogenesis"/>
    <property type="evidence" value="ECO:0007669"/>
    <property type="project" value="Ensembl"/>
</dbReference>
<dbReference type="GO" id="GO:1902951">
    <property type="term" value="P:negative regulation of dendritic spine maintenance"/>
    <property type="evidence" value="ECO:0007669"/>
    <property type="project" value="Ensembl"/>
</dbReference>
<dbReference type="GO" id="GO:0010629">
    <property type="term" value="P:negative regulation of gene expression"/>
    <property type="evidence" value="ECO:0007669"/>
    <property type="project" value="Ensembl"/>
</dbReference>
<dbReference type="GO" id="GO:0042177">
    <property type="term" value="P:negative regulation of protein catabolic process"/>
    <property type="evidence" value="ECO:0007669"/>
    <property type="project" value="Ensembl"/>
</dbReference>
<dbReference type="GO" id="GO:0031397">
    <property type="term" value="P:negative regulation of protein ubiquitination"/>
    <property type="evidence" value="ECO:0007669"/>
    <property type="project" value="Ensembl"/>
</dbReference>
<dbReference type="GO" id="GO:0001764">
    <property type="term" value="P:neuron migration"/>
    <property type="evidence" value="ECO:0007669"/>
    <property type="project" value="Ensembl"/>
</dbReference>
<dbReference type="GO" id="GO:0018108">
    <property type="term" value="P:peptidyl-tyrosine phosphorylation"/>
    <property type="evidence" value="ECO:0000250"/>
    <property type="project" value="UniProtKB"/>
</dbReference>
<dbReference type="GO" id="GO:0010976">
    <property type="term" value="P:positive regulation of neuron projection development"/>
    <property type="evidence" value="ECO:0007669"/>
    <property type="project" value="Ensembl"/>
</dbReference>
<dbReference type="GO" id="GO:1900182">
    <property type="term" value="P:positive regulation of protein localization to nucleus"/>
    <property type="evidence" value="ECO:0007669"/>
    <property type="project" value="Ensembl"/>
</dbReference>
<dbReference type="GO" id="GO:0090314">
    <property type="term" value="P:positive regulation of protein targeting to membrane"/>
    <property type="evidence" value="ECO:0007669"/>
    <property type="project" value="Ensembl"/>
</dbReference>
<dbReference type="GO" id="GO:0030163">
    <property type="term" value="P:protein catabolic process"/>
    <property type="evidence" value="ECO:0007669"/>
    <property type="project" value="Ensembl"/>
</dbReference>
<dbReference type="GO" id="GO:0016567">
    <property type="term" value="P:protein ubiquitination"/>
    <property type="evidence" value="ECO:0007669"/>
    <property type="project" value="Ensembl"/>
</dbReference>
<dbReference type="GO" id="GO:0038026">
    <property type="term" value="P:reelin-mediated signaling pathway"/>
    <property type="evidence" value="ECO:0000250"/>
    <property type="project" value="UniProtKB"/>
</dbReference>
<dbReference type="GO" id="GO:1905664">
    <property type="term" value="P:regulation of calcium ion import across plasma membrane"/>
    <property type="evidence" value="ECO:0007669"/>
    <property type="project" value="Ensembl"/>
</dbReference>
<dbReference type="GO" id="GO:0008360">
    <property type="term" value="P:regulation of cell shape"/>
    <property type="evidence" value="ECO:0007669"/>
    <property type="project" value="Ensembl"/>
</dbReference>
<dbReference type="GO" id="GO:1900449">
    <property type="term" value="P:regulation of glutamate receptor signaling pathway"/>
    <property type="evidence" value="ECO:0007669"/>
    <property type="project" value="Ensembl"/>
</dbReference>
<dbReference type="GO" id="GO:0045471">
    <property type="term" value="P:response to ethanol"/>
    <property type="evidence" value="ECO:0007669"/>
    <property type="project" value="Ensembl"/>
</dbReference>
<dbReference type="GO" id="GO:0050852">
    <property type="term" value="P:T cell receptor signaling pathway"/>
    <property type="evidence" value="ECO:0000318"/>
    <property type="project" value="GO_Central"/>
</dbReference>
<dbReference type="CDD" id="cd05070">
    <property type="entry name" value="PTKc_Fyn"/>
    <property type="match status" value="1"/>
</dbReference>
<dbReference type="CDD" id="cd10418">
    <property type="entry name" value="SH2_Src_Fyn_isoform_a_like"/>
    <property type="match status" value="1"/>
</dbReference>
<dbReference type="CDD" id="cd12006">
    <property type="entry name" value="SH3_Fyn_Yrk"/>
    <property type="match status" value="1"/>
</dbReference>
<dbReference type="FunFam" id="1.10.510.10:FF:000553">
    <property type="entry name" value="Tyrosine-protein kinase"/>
    <property type="match status" value="1"/>
</dbReference>
<dbReference type="FunFam" id="3.30.200.20:FF:000016">
    <property type="entry name" value="Tyrosine-protein kinase"/>
    <property type="match status" value="1"/>
</dbReference>
<dbReference type="FunFam" id="2.30.30.40:FF:000182">
    <property type="entry name" value="Tyrosine-protein kinase Fyn"/>
    <property type="match status" value="1"/>
</dbReference>
<dbReference type="FunFam" id="3.30.505.10:FF:000120">
    <property type="entry name" value="Tyrosine-protein kinase Fyn"/>
    <property type="match status" value="1"/>
</dbReference>
<dbReference type="Gene3D" id="3.30.200.20">
    <property type="entry name" value="Phosphorylase Kinase, domain 1"/>
    <property type="match status" value="1"/>
</dbReference>
<dbReference type="Gene3D" id="3.30.505.10">
    <property type="entry name" value="SH2 domain"/>
    <property type="match status" value="1"/>
</dbReference>
<dbReference type="Gene3D" id="2.30.30.40">
    <property type="entry name" value="SH3 Domains"/>
    <property type="match status" value="1"/>
</dbReference>
<dbReference type="Gene3D" id="1.10.510.10">
    <property type="entry name" value="Transferase(Phosphotransferase) domain 1"/>
    <property type="match status" value="1"/>
</dbReference>
<dbReference type="InterPro" id="IPR047924">
    <property type="entry name" value="Fyn/Yrk_SH2"/>
</dbReference>
<dbReference type="InterPro" id="IPR035750">
    <property type="entry name" value="Fyn/Yrk_SH3"/>
</dbReference>
<dbReference type="InterPro" id="IPR011009">
    <property type="entry name" value="Kinase-like_dom_sf"/>
</dbReference>
<dbReference type="InterPro" id="IPR050198">
    <property type="entry name" value="Non-receptor_tyrosine_kinases"/>
</dbReference>
<dbReference type="InterPro" id="IPR000719">
    <property type="entry name" value="Prot_kinase_dom"/>
</dbReference>
<dbReference type="InterPro" id="IPR017441">
    <property type="entry name" value="Protein_kinase_ATP_BS"/>
</dbReference>
<dbReference type="InterPro" id="IPR001245">
    <property type="entry name" value="Ser-Thr/Tyr_kinase_cat_dom"/>
</dbReference>
<dbReference type="InterPro" id="IPR000980">
    <property type="entry name" value="SH2"/>
</dbReference>
<dbReference type="InterPro" id="IPR036860">
    <property type="entry name" value="SH2_dom_sf"/>
</dbReference>
<dbReference type="InterPro" id="IPR036028">
    <property type="entry name" value="SH3-like_dom_sf"/>
</dbReference>
<dbReference type="InterPro" id="IPR001452">
    <property type="entry name" value="SH3_domain"/>
</dbReference>
<dbReference type="InterPro" id="IPR008266">
    <property type="entry name" value="Tyr_kinase_AS"/>
</dbReference>
<dbReference type="InterPro" id="IPR020635">
    <property type="entry name" value="Tyr_kinase_cat_dom"/>
</dbReference>
<dbReference type="PANTHER" id="PTHR24418">
    <property type="entry name" value="TYROSINE-PROTEIN KINASE"/>
    <property type="match status" value="1"/>
</dbReference>
<dbReference type="Pfam" id="PF07714">
    <property type="entry name" value="PK_Tyr_Ser-Thr"/>
    <property type="match status" value="1"/>
</dbReference>
<dbReference type="Pfam" id="PF00017">
    <property type="entry name" value="SH2"/>
    <property type="match status" value="1"/>
</dbReference>
<dbReference type="Pfam" id="PF00018">
    <property type="entry name" value="SH3_1"/>
    <property type="match status" value="1"/>
</dbReference>
<dbReference type="PRINTS" id="PR00401">
    <property type="entry name" value="SH2DOMAIN"/>
</dbReference>
<dbReference type="PRINTS" id="PR00452">
    <property type="entry name" value="SH3DOMAIN"/>
</dbReference>
<dbReference type="PRINTS" id="PR00109">
    <property type="entry name" value="TYRKINASE"/>
</dbReference>
<dbReference type="SMART" id="SM00252">
    <property type="entry name" value="SH2"/>
    <property type="match status" value="1"/>
</dbReference>
<dbReference type="SMART" id="SM00326">
    <property type="entry name" value="SH3"/>
    <property type="match status" value="1"/>
</dbReference>
<dbReference type="SMART" id="SM00219">
    <property type="entry name" value="TyrKc"/>
    <property type="match status" value="1"/>
</dbReference>
<dbReference type="SUPFAM" id="SSF56112">
    <property type="entry name" value="Protein kinase-like (PK-like)"/>
    <property type="match status" value="1"/>
</dbReference>
<dbReference type="SUPFAM" id="SSF55550">
    <property type="entry name" value="SH2 domain"/>
    <property type="match status" value="1"/>
</dbReference>
<dbReference type="SUPFAM" id="SSF50044">
    <property type="entry name" value="SH3-domain"/>
    <property type="match status" value="1"/>
</dbReference>
<dbReference type="PROSITE" id="PS00107">
    <property type="entry name" value="PROTEIN_KINASE_ATP"/>
    <property type="match status" value="1"/>
</dbReference>
<dbReference type="PROSITE" id="PS50011">
    <property type="entry name" value="PROTEIN_KINASE_DOM"/>
    <property type="match status" value="1"/>
</dbReference>
<dbReference type="PROSITE" id="PS00109">
    <property type="entry name" value="PROTEIN_KINASE_TYR"/>
    <property type="match status" value="1"/>
</dbReference>
<dbReference type="PROSITE" id="PS50001">
    <property type="entry name" value="SH2"/>
    <property type="match status" value="1"/>
</dbReference>
<dbReference type="PROSITE" id="PS50002">
    <property type="entry name" value="SH3"/>
    <property type="match status" value="1"/>
</dbReference>
<sequence length="537" mass="60718">MGCVQCKDKEATKLTEERDGSLNQSSGYRYGTDPTPQHYPSFGVTSIPNYNNFHGAGGQGLTVFGGVNSSSHTGTLRTRGGTGVTLFVALYDYEARTEDDLSFHKGEKFQILNSSEGDWWEARSLTTGETGYIPSNYVAPVDSIQAEEWYFGKLGRKDAERQLLSFGNPRGTFLIRESETTKGAYSLSIRDWDDMKGDHVKHYKIRKLDNGGYYITTRAQFETLQQLVQHYSERAAGLCCRLVVPCHKGMPRLTDLSVKTKDVWEIPRESLQLIKRLGNGQFGEVWMGTWNGNTKVAIKTLKPGTMSPESFLEEAQIMKKLKHDKLVQLYAVVSEEPIYIVTEYMNKGSLLDFLKDGEGRALKLPNLVDMAAQVAAGMAYIERMNYIHRDLRSANILVGNGLICKIADFGLARLIEDNEYTARQGAKFPIKWTAPEAALYGRFTIKSDVWSFGILLTELVTKGRVPYPGMNNREVLEQVERGYRMPCPQDCPISLHELMIHCWKKDPEERPTFEYLQGFLEDYFTATEPQYQPGENL</sequence>
<organism>
    <name type="scientific">Bos taurus</name>
    <name type="common">Bovine</name>
    <dbReference type="NCBI Taxonomy" id="9913"/>
    <lineage>
        <taxon>Eukaryota</taxon>
        <taxon>Metazoa</taxon>
        <taxon>Chordata</taxon>
        <taxon>Craniata</taxon>
        <taxon>Vertebrata</taxon>
        <taxon>Euteleostomi</taxon>
        <taxon>Mammalia</taxon>
        <taxon>Eutheria</taxon>
        <taxon>Laurasiatheria</taxon>
        <taxon>Artiodactyla</taxon>
        <taxon>Ruminantia</taxon>
        <taxon>Pecora</taxon>
        <taxon>Bovidae</taxon>
        <taxon>Bovinae</taxon>
        <taxon>Bos</taxon>
    </lineage>
</organism>
<accession>A0JNB0</accession>
<reference evidence="13" key="1">
    <citation type="submission" date="2006-10" db="EMBL/GenBank/DDBJ databases">
        <authorList>
            <consortium name="NIH - Mammalian Gene Collection (MGC) project"/>
        </authorList>
    </citation>
    <scope>NUCLEOTIDE SEQUENCE [LARGE SCALE MRNA]</scope>
    <source>
        <strain evidence="13">Hereford</strain>
        <tissue evidence="13">Fetal medulla</tissue>
    </source>
</reference>
<reference evidence="12" key="2">
    <citation type="journal article" date="2000" name="J. Biol. Chem.">
        <title>Regulation of the bovine kidney microsomal chloride channel p64 by p59fyn, a Src family tyrosine kinase.</title>
        <authorList>
            <person name="Edwards J.C."/>
            <person name="Kapadia S."/>
        </authorList>
    </citation>
    <scope>FUNCTION</scope>
</reference>
<keyword id="KW-1064">Adaptive immunity</keyword>
<keyword id="KW-0067">ATP-binding</keyword>
<keyword id="KW-1003">Cell membrane</keyword>
<keyword id="KW-0963">Cytoplasm</keyword>
<keyword id="KW-0217">Developmental protein</keyword>
<keyword id="KW-0391">Immunity</keyword>
<keyword id="KW-0418">Kinase</keyword>
<keyword id="KW-0449">Lipoprotein</keyword>
<keyword id="KW-0464">Manganese</keyword>
<keyword id="KW-0472">Membrane</keyword>
<keyword id="KW-0479">Metal-binding</keyword>
<keyword id="KW-0519">Myristate</keyword>
<keyword id="KW-0547">Nucleotide-binding</keyword>
<keyword id="KW-0539">Nucleus</keyword>
<keyword id="KW-0564">Palmitate</keyword>
<keyword id="KW-0597">Phosphoprotein</keyword>
<keyword id="KW-0656">Proto-oncogene</keyword>
<keyword id="KW-1185">Reference proteome</keyword>
<keyword id="KW-0727">SH2 domain</keyword>
<keyword id="KW-0728">SH3 domain</keyword>
<keyword id="KW-0808">Transferase</keyword>
<keyword id="KW-0829">Tyrosine-protein kinase</keyword>